<feature type="chain" id="PRO_0000211523" description="Putative charged multivesicular body protein 4B-like protein CHMP4BP1">
    <location>
        <begin position="1"/>
        <end position="171"/>
    </location>
</feature>
<feature type="region of interest" description="Disordered" evidence="1">
    <location>
        <begin position="1"/>
        <end position="24"/>
    </location>
</feature>
<feature type="region of interest" description="Disordered" evidence="1">
    <location>
        <begin position="132"/>
        <end position="171"/>
    </location>
</feature>
<feature type="compositionally biased region" description="Basic and acidic residues" evidence="1">
    <location>
        <begin position="1"/>
        <end position="17"/>
    </location>
</feature>
<proteinExistence type="uncertain"/>
<protein>
    <recommendedName>
        <fullName>Putative charged multivesicular body protein 4B-like protein CHMP4BP1</fullName>
    </recommendedName>
    <alternativeName>
        <fullName>Charged multivesicular body protein 4B pseudogene 1</fullName>
    </alternativeName>
</protein>
<dbReference type="EMBL" id="AF531436">
    <property type="protein sequence ID" value="AAM96689.1"/>
    <property type="molecule type" value="mRNA"/>
</dbReference>
<dbReference type="EMBL" id="AL158801">
    <property type="status" value="NOT_ANNOTATED_CDS"/>
    <property type="molecule type" value="Genomic_DNA"/>
</dbReference>
<dbReference type="SMR" id="P59074"/>
<dbReference type="FunCoup" id="P59074">
    <property type="interactions" value="270"/>
</dbReference>
<dbReference type="BioMuta" id="HGNC:43616"/>
<dbReference type="DMDM" id="24638418"/>
<dbReference type="jPOST" id="P59074"/>
<dbReference type="MassIVE" id="P59074"/>
<dbReference type="ProteomicsDB" id="57126"/>
<dbReference type="AGR" id="HGNC:43616"/>
<dbReference type="GeneCards" id="CHMP4BP1"/>
<dbReference type="HGNC" id="HGNC:43616">
    <property type="gene designation" value="CHMP4BP1"/>
</dbReference>
<dbReference type="neXtProt" id="NX_P59074"/>
<dbReference type="InParanoid" id="P59074"/>
<dbReference type="PAN-GO" id="P59074">
    <property type="GO annotations" value="5 GO annotations based on evolutionary models"/>
</dbReference>
<dbReference type="Pharos" id="P59074">
    <property type="development level" value="Tdark"/>
</dbReference>
<dbReference type="Proteomes" id="UP000005640">
    <property type="component" value="Unplaced"/>
</dbReference>
<dbReference type="RNAct" id="P59074">
    <property type="molecule type" value="protein"/>
</dbReference>
<dbReference type="GO" id="GO:1904930">
    <property type="term" value="C:amphisome membrane"/>
    <property type="evidence" value="ECO:0007669"/>
    <property type="project" value="UniProtKB-ARBA"/>
</dbReference>
<dbReference type="GO" id="GO:0009898">
    <property type="term" value="C:cytoplasmic side of plasma membrane"/>
    <property type="evidence" value="ECO:0000318"/>
    <property type="project" value="GO_Central"/>
</dbReference>
<dbReference type="GO" id="GO:0000815">
    <property type="term" value="C:ESCRT III complex"/>
    <property type="evidence" value="ECO:0000318"/>
    <property type="project" value="GO_Central"/>
</dbReference>
<dbReference type="GO" id="GO:0000776">
    <property type="term" value="C:kinetochore"/>
    <property type="evidence" value="ECO:0007669"/>
    <property type="project" value="UniProtKB-ARBA"/>
</dbReference>
<dbReference type="GO" id="GO:0005828">
    <property type="term" value="C:kinetochore microtubule"/>
    <property type="evidence" value="ECO:0007669"/>
    <property type="project" value="UniProtKB-ARBA"/>
</dbReference>
<dbReference type="GO" id="GO:0005765">
    <property type="term" value="C:lysosomal membrane"/>
    <property type="evidence" value="ECO:0007669"/>
    <property type="project" value="UniProtKB-ARBA"/>
</dbReference>
<dbReference type="GO" id="GO:0030496">
    <property type="term" value="C:midbody"/>
    <property type="evidence" value="ECO:0007669"/>
    <property type="project" value="UniProtKB-ARBA"/>
</dbReference>
<dbReference type="GO" id="GO:0005771">
    <property type="term" value="C:multivesicular body"/>
    <property type="evidence" value="ECO:0000318"/>
    <property type="project" value="GO_Central"/>
</dbReference>
<dbReference type="GO" id="GO:0032585">
    <property type="term" value="C:multivesicular body membrane"/>
    <property type="evidence" value="ECO:0007669"/>
    <property type="project" value="UniProtKB-ARBA"/>
</dbReference>
<dbReference type="GO" id="GO:0005643">
    <property type="term" value="C:nuclear pore"/>
    <property type="evidence" value="ECO:0007669"/>
    <property type="project" value="UniProtKB-ARBA"/>
</dbReference>
<dbReference type="GO" id="GO:0097352">
    <property type="term" value="P:autophagosome maturation"/>
    <property type="evidence" value="ECO:0007669"/>
    <property type="project" value="UniProtKB-ARBA"/>
</dbReference>
<dbReference type="GO" id="GO:1902774">
    <property type="term" value="P:late endosome to lysosome transport"/>
    <property type="evidence" value="ECO:0007669"/>
    <property type="project" value="UniProtKB-ARBA"/>
</dbReference>
<dbReference type="GO" id="GO:0032511">
    <property type="term" value="P:late endosome to vacuole transport via multivesicular body sorting pathway"/>
    <property type="evidence" value="ECO:0000318"/>
    <property type="project" value="GO_Central"/>
</dbReference>
<dbReference type="GO" id="GO:0061952">
    <property type="term" value="P:midbody abscission"/>
    <property type="evidence" value="ECO:0007669"/>
    <property type="project" value="UniProtKB-ARBA"/>
</dbReference>
<dbReference type="GO" id="GO:0007080">
    <property type="term" value="P:mitotic metaphase chromosome alignment"/>
    <property type="evidence" value="ECO:0007669"/>
    <property type="project" value="UniProtKB-ARBA"/>
</dbReference>
<dbReference type="GO" id="GO:0031468">
    <property type="term" value="P:nuclear membrane reassembly"/>
    <property type="evidence" value="ECO:0007669"/>
    <property type="project" value="UniProtKB-ARBA"/>
</dbReference>
<dbReference type="GO" id="GO:0001778">
    <property type="term" value="P:plasma membrane repair"/>
    <property type="evidence" value="ECO:0007669"/>
    <property type="project" value="UniProtKB-ARBA"/>
</dbReference>
<dbReference type="GO" id="GO:1901673">
    <property type="term" value="P:regulation of mitotic spindle assembly"/>
    <property type="evidence" value="ECO:0007669"/>
    <property type="project" value="UniProtKB-ARBA"/>
</dbReference>
<dbReference type="GO" id="GO:0043162">
    <property type="term" value="P:ubiquitin-dependent protein catabolic process via the multivesicular body sorting pathway"/>
    <property type="evidence" value="ECO:0007669"/>
    <property type="project" value="UniProtKB-ARBA"/>
</dbReference>
<dbReference type="GO" id="GO:0006900">
    <property type="term" value="P:vesicle budding from membrane"/>
    <property type="evidence" value="ECO:0000318"/>
    <property type="project" value="GO_Central"/>
</dbReference>
<dbReference type="GO" id="GO:0046761">
    <property type="term" value="P:viral budding from plasma membrane"/>
    <property type="evidence" value="ECO:0007669"/>
    <property type="project" value="UniProtKB-ARBA"/>
</dbReference>
<dbReference type="GO" id="GO:0039702">
    <property type="term" value="P:viral budding via host ESCRT complex"/>
    <property type="evidence" value="ECO:0007669"/>
    <property type="project" value="UniProtKB-ARBA"/>
</dbReference>
<dbReference type="Gene3D" id="6.10.250.1710">
    <property type="match status" value="1"/>
</dbReference>
<dbReference type="Gene3D" id="1.10.287.1060">
    <property type="entry name" value="ESAT-6-like"/>
    <property type="match status" value="1"/>
</dbReference>
<dbReference type="InterPro" id="IPR005024">
    <property type="entry name" value="Snf7_fam"/>
</dbReference>
<dbReference type="PANTHER" id="PTHR22761">
    <property type="entry name" value="CHARGED MULTIVESICULAR BODY PROTEIN"/>
    <property type="match status" value="1"/>
</dbReference>
<dbReference type="PANTHER" id="PTHR22761:SF41">
    <property type="entry name" value="CHARGED MULTIVESICULAR BODY PROTEIN 4B-LIKE PROTEIN CHMP4BP1-RELATED"/>
    <property type="match status" value="1"/>
</dbReference>
<dbReference type="Pfam" id="PF03357">
    <property type="entry name" value="Snf7"/>
    <property type="match status" value="1"/>
</dbReference>
<sequence>MLSKKQEFLEKKIEQRHGTKNKPAALQALKRKKRYEKQLAQIDGTLSTIEFQQQALENANTNTEVLKNMGSAAKAKKAAHDNMDIDKVDELMQDIADQQELGEEISTAISKPVGFGEKSDEDELMAELEELEQEEPDKNLLEVSGPETVPLPNVPSIALPSKPAKKRKTTT</sequence>
<accession>P59074</accession>
<accession>Q8NFA9</accession>
<gene>
    <name type="primary">CHMP4BP1</name>
    <name type="ORF">CGI-301</name>
</gene>
<name>CHM4P_HUMAN</name>
<comment type="similarity">
    <text evidence="2">Belongs to the SNF7 family.</text>
</comment>
<comment type="caution">
    <text evidence="2">Could be the product of a pseudogene.</text>
</comment>
<evidence type="ECO:0000256" key="1">
    <source>
        <dbReference type="SAM" id="MobiDB-lite"/>
    </source>
</evidence>
<evidence type="ECO:0000305" key="2"/>
<keyword id="KW-1267">Proteomics identification</keyword>
<keyword id="KW-1185">Reference proteome</keyword>
<organism>
    <name type="scientific">Homo sapiens</name>
    <name type="common">Human</name>
    <dbReference type="NCBI Taxonomy" id="9606"/>
    <lineage>
        <taxon>Eukaryota</taxon>
        <taxon>Metazoa</taxon>
        <taxon>Chordata</taxon>
        <taxon>Craniata</taxon>
        <taxon>Vertebrata</taxon>
        <taxon>Euteleostomi</taxon>
        <taxon>Mammalia</taxon>
        <taxon>Eutheria</taxon>
        <taxon>Euarchontoglires</taxon>
        <taxon>Primates</taxon>
        <taxon>Haplorrhini</taxon>
        <taxon>Catarrhini</taxon>
        <taxon>Hominidae</taxon>
        <taxon>Homo</taxon>
    </lineage>
</organism>
<reference key="1">
    <citation type="submission" date="2002-07" db="EMBL/GenBank/DDBJ databases">
        <authorList>
            <person name="Ye J.J."/>
        </authorList>
    </citation>
    <scope>NUCLEOTIDE SEQUENCE [MRNA]</scope>
</reference>
<reference key="2">
    <citation type="journal article" date="2003" name="Nature">
        <title>The DNA sequence and analysis of human chromosome 14.</title>
        <authorList>
            <person name="Heilig R."/>
            <person name="Eckenberg R."/>
            <person name="Petit J.-L."/>
            <person name="Fonknechten N."/>
            <person name="Da Silva C."/>
            <person name="Cattolico L."/>
            <person name="Levy M."/>
            <person name="Barbe V."/>
            <person name="De Berardinis V."/>
            <person name="Ureta-Vidal A."/>
            <person name="Pelletier E."/>
            <person name="Vico V."/>
            <person name="Anthouard V."/>
            <person name="Rowen L."/>
            <person name="Madan A."/>
            <person name="Qin S."/>
            <person name="Sun H."/>
            <person name="Du H."/>
            <person name="Pepin K."/>
            <person name="Artiguenave F."/>
            <person name="Robert C."/>
            <person name="Cruaud C."/>
            <person name="Bruels T."/>
            <person name="Jaillon O."/>
            <person name="Friedlander L."/>
            <person name="Samson G."/>
            <person name="Brottier P."/>
            <person name="Cure S."/>
            <person name="Segurens B."/>
            <person name="Aniere F."/>
            <person name="Samain S."/>
            <person name="Crespeau H."/>
            <person name="Abbasi N."/>
            <person name="Aiach N."/>
            <person name="Boscus D."/>
            <person name="Dickhoff R."/>
            <person name="Dors M."/>
            <person name="Dubois I."/>
            <person name="Friedman C."/>
            <person name="Gouyvenoux M."/>
            <person name="James R."/>
            <person name="Madan A."/>
            <person name="Mairey-Estrada B."/>
            <person name="Mangenot S."/>
            <person name="Martins N."/>
            <person name="Menard M."/>
            <person name="Oztas S."/>
            <person name="Ratcliffe A."/>
            <person name="Shaffer T."/>
            <person name="Trask B."/>
            <person name="Vacherie B."/>
            <person name="Bellemere C."/>
            <person name="Belser C."/>
            <person name="Besnard-Gonnet M."/>
            <person name="Bartol-Mavel D."/>
            <person name="Boutard M."/>
            <person name="Briez-Silla S."/>
            <person name="Combette S."/>
            <person name="Dufosse-Laurent V."/>
            <person name="Ferron C."/>
            <person name="Lechaplais C."/>
            <person name="Louesse C."/>
            <person name="Muselet D."/>
            <person name="Magdelenat G."/>
            <person name="Pateau E."/>
            <person name="Petit E."/>
            <person name="Sirvain-Trukniewicz P."/>
            <person name="Trybou A."/>
            <person name="Vega-Czarny N."/>
            <person name="Bataille E."/>
            <person name="Bluet E."/>
            <person name="Bordelais I."/>
            <person name="Dubois M."/>
            <person name="Dumont C."/>
            <person name="Guerin T."/>
            <person name="Haffray S."/>
            <person name="Hammadi R."/>
            <person name="Muanga J."/>
            <person name="Pellouin V."/>
            <person name="Robert D."/>
            <person name="Wunderle E."/>
            <person name="Gauguet G."/>
            <person name="Roy A."/>
            <person name="Sainte-Marthe L."/>
            <person name="Verdier J."/>
            <person name="Verdier-Discala C."/>
            <person name="Hillier L.W."/>
            <person name="Fulton L."/>
            <person name="McPherson J."/>
            <person name="Matsuda F."/>
            <person name="Wilson R."/>
            <person name="Scarpelli C."/>
            <person name="Gyapay G."/>
            <person name="Wincker P."/>
            <person name="Saurin W."/>
            <person name="Quetier F."/>
            <person name="Waterston R."/>
            <person name="Hood L."/>
            <person name="Weissenbach J."/>
        </authorList>
    </citation>
    <scope>NUCLEOTIDE SEQUENCE [LARGE SCALE GENOMIC DNA]</scope>
</reference>